<accession>Q72ZV3</accession>
<sequence length="425" mass="47200">MAAKWEKLEGNVGVLTIEVDAKEVNNSIDAAFKKVVKTINVPGFRKGKMPRPLFEQRFGVESLYQDALDIILPKAYGEAIDEAGIFPVAHPEIDIEKFEKNANLIFTAKVTVKPEVKLGEYKGLAVEKVETTVTDEDVENELKSLQERQAELVVKEEGTVENGDTAVIDFEGFVDGEAFEGGKGENYSLAIGSGTFIPGFEEQVIGLKSGESKDVEVSFPEEYHAAELAGKPATFKVTVHEIKTKELPELNDEFAKEADEAVATLDELKAKLRTNLEEGKKHEAEHKVRDEVVELAAANAEIDIPEAMIDTELDRMVREFEQRLSQQGMNLELYYQFTGTDADKLKEQMKEDAQKRVRINLVLEAIIEAENIEVTEEEVTAEVEKMAEMYGMPVDAIKQALGSVDALAEDLKVRKAVDFLVENAA</sequence>
<gene>
    <name evidence="1" type="primary">tig</name>
    <name type="ordered locus">BCE_4564</name>
</gene>
<feature type="chain" id="PRO_0000179306" description="Trigger factor">
    <location>
        <begin position="1"/>
        <end position="425"/>
    </location>
</feature>
<feature type="domain" description="PPIase FKBP-type" evidence="1">
    <location>
        <begin position="163"/>
        <end position="248"/>
    </location>
</feature>
<comment type="function">
    <text evidence="1">Involved in protein export. Acts as a chaperone by maintaining the newly synthesized protein in an open conformation. Functions as a peptidyl-prolyl cis-trans isomerase.</text>
</comment>
<comment type="catalytic activity">
    <reaction evidence="1">
        <text>[protein]-peptidylproline (omega=180) = [protein]-peptidylproline (omega=0)</text>
        <dbReference type="Rhea" id="RHEA:16237"/>
        <dbReference type="Rhea" id="RHEA-COMP:10747"/>
        <dbReference type="Rhea" id="RHEA-COMP:10748"/>
        <dbReference type="ChEBI" id="CHEBI:83833"/>
        <dbReference type="ChEBI" id="CHEBI:83834"/>
        <dbReference type="EC" id="5.2.1.8"/>
    </reaction>
</comment>
<comment type="subcellular location">
    <subcellularLocation>
        <location>Cytoplasm</location>
    </subcellularLocation>
    <text evidence="1">About half TF is bound to the ribosome near the polypeptide exit tunnel while the other half is free in the cytoplasm.</text>
</comment>
<comment type="domain">
    <text evidence="1">Consists of 3 domains; the N-terminus binds the ribosome, the middle domain has PPIase activity, while the C-terminus has intrinsic chaperone activity on its own.</text>
</comment>
<comment type="similarity">
    <text evidence="1">Belongs to the FKBP-type PPIase family. Tig subfamily.</text>
</comment>
<keyword id="KW-0131">Cell cycle</keyword>
<keyword id="KW-0132">Cell division</keyword>
<keyword id="KW-0143">Chaperone</keyword>
<keyword id="KW-0963">Cytoplasm</keyword>
<keyword id="KW-0413">Isomerase</keyword>
<keyword id="KW-0697">Rotamase</keyword>
<protein>
    <recommendedName>
        <fullName evidence="1">Trigger factor</fullName>
        <shortName evidence="1">TF</shortName>
        <ecNumber evidence="1">5.2.1.8</ecNumber>
    </recommendedName>
    <alternativeName>
        <fullName evidence="1">PPIase</fullName>
    </alternativeName>
</protein>
<reference key="1">
    <citation type="journal article" date="2004" name="Nucleic Acids Res.">
        <title>The genome sequence of Bacillus cereus ATCC 10987 reveals metabolic adaptations and a large plasmid related to Bacillus anthracis pXO1.</title>
        <authorList>
            <person name="Rasko D.A."/>
            <person name="Ravel J."/>
            <person name="Oekstad O.A."/>
            <person name="Helgason E."/>
            <person name="Cer R.Z."/>
            <person name="Jiang L."/>
            <person name="Shores K.A."/>
            <person name="Fouts D.E."/>
            <person name="Tourasse N.J."/>
            <person name="Angiuoli S.V."/>
            <person name="Kolonay J.F."/>
            <person name="Nelson W.C."/>
            <person name="Kolstoe A.-B."/>
            <person name="Fraser C.M."/>
            <person name="Read T.D."/>
        </authorList>
    </citation>
    <scope>NUCLEOTIDE SEQUENCE [LARGE SCALE GENOMIC DNA]</scope>
    <source>
        <strain>ATCC 10987 / NRS 248</strain>
    </source>
</reference>
<evidence type="ECO:0000255" key="1">
    <source>
        <dbReference type="HAMAP-Rule" id="MF_00303"/>
    </source>
</evidence>
<organism>
    <name type="scientific">Bacillus cereus (strain ATCC 10987 / NRS 248)</name>
    <dbReference type="NCBI Taxonomy" id="222523"/>
    <lineage>
        <taxon>Bacteria</taxon>
        <taxon>Bacillati</taxon>
        <taxon>Bacillota</taxon>
        <taxon>Bacilli</taxon>
        <taxon>Bacillales</taxon>
        <taxon>Bacillaceae</taxon>
        <taxon>Bacillus</taxon>
        <taxon>Bacillus cereus group</taxon>
    </lineage>
</organism>
<dbReference type="EC" id="5.2.1.8" evidence="1"/>
<dbReference type="EMBL" id="AE017194">
    <property type="protein sequence ID" value="AAS43465.1"/>
    <property type="molecule type" value="Genomic_DNA"/>
</dbReference>
<dbReference type="SMR" id="Q72ZV3"/>
<dbReference type="KEGG" id="bca:BCE_4564"/>
<dbReference type="HOGENOM" id="CLU_033058_3_2_9"/>
<dbReference type="Proteomes" id="UP000002527">
    <property type="component" value="Chromosome"/>
</dbReference>
<dbReference type="GO" id="GO:0005737">
    <property type="term" value="C:cytoplasm"/>
    <property type="evidence" value="ECO:0007669"/>
    <property type="project" value="UniProtKB-SubCell"/>
</dbReference>
<dbReference type="GO" id="GO:0003755">
    <property type="term" value="F:peptidyl-prolyl cis-trans isomerase activity"/>
    <property type="evidence" value="ECO:0007669"/>
    <property type="project" value="UniProtKB-UniRule"/>
</dbReference>
<dbReference type="GO" id="GO:0044183">
    <property type="term" value="F:protein folding chaperone"/>
    <property type="evidence" value="ECO:0007669"/>
    <property type="project" value="TreeGrafter"/>
</dbReference>
<dbReference type="GO" id="GO:0043022">
    <property type="term" value="F:ribosome binding"/>
    <property type="evidence" value="ECO:0007669"/>
    <property type="project" value="TreeGrafter"/>
</dbReference>
<dbReference type="GO" id="GO:0051083">
    <property type="term" value="P:'de novo' cotranslational protein folding"/>
    <property type="evidence" value="ECO:0007669"/>
    <property type="project" value="TreeGrafter"/>
</dbReference>
<dbReference type="GO" id="GO:0051301">
    <property type="term" value="P:cell division"/>
    <property type="evidence" value="ECO:0007669"/>
    <property type="project" value="UniProtKB-KW"/>
</dbReference>
<dbReference type="GO" id="GO:0061077">
    <property type="term" value="P:chaperone-mediated protein folding"/>
    <property type="evidence" value="ECO:0007669"/>
    <property type="project" value="TreeGrafter"/>
</dbReference>
<dbReference type="GO" id="GO:0015031">
    <property type="term" value="P:protein transport"/>
    <property type="evidence" value="ECO:0007669"/>
    <property type="project" value="UniProtKB-UniRule"/>
</dbReference>
<dbReference type="GO" id="GO:0043335">
    <property type="term" value="P:protein unfolding"/>
    <property type="evidence" value="ECO:0007669"/>
    <property type="project" value="TreeGrafter"/>
</dbReference>
<dbReference type="FunFam" id="3.10.50.40:FF:000001">
    <property type="entry name" value="Trigger factor"/>
    <property type="match status" value="1"/>
</dbReference>
<dbReference type="FunFam" id="3.30.70.1050:FF:000002">
    <property type="entry name" value="Trigger factor"/>
    <property type="match status" value="1"/>
</dbReference>
<dbReference type="Gene3D" id="3.10.50.40">
    <property type="match status" value="1"/>
</dbReference>
<dbReference type="Gene3D" id="3.30.70.1050">
    <property type="entry name" value="Trigger factor ribosome-binding domain"/>
    <property type="match status" value="1"/>
</dbReference>
<dbReference type="Gene3D" id="1.10.3120.10">
    <property type="entry name" value="Trigger factor, C-terminal domain"/>
    <property type="match status" value="1"/>
</dbReference>
<dbReference type="HAMAP" id="MF_00303">
    <property type="entry name" value="Trigger_factor_Tig"/>
    <property type="match status" value="1"/>
</dbReference>
<dbReference type="InterPro" id="IPR046357">
    <property type="entry name" value="PPIase_dom_sf"/>
</dbReference>
<dbReference type="InterPro" id="IPR001179">
    <property type="entry name" value="PPIase_FKBP_dom"/>
</dbReference>
<dbReference type="InterPro" id="IPR005215">
    <property type="entry name" value="Trig_fac"/>
</dbReference>
<dbReference type="InterPro" id="IPR008880">
    <property type="entry name" value="Trigger_fac_C"/>
</dbReference>
<dbReference type="InterPro" id="IPR037041">
    <property type="entry name" value="Trigger_fac_C_sf"/>
</dbReference>
<dbReference type="InterPro" id="IPR008881">
    <property type="entry name" value="Trigger_fac_ribosome-bd_bac"/>
</dbReference>
<dbReference type="InterPro" id="IPR036611">
    <property type="entry name" value="Trigger_fac_ribosome-bd_sf"/>
</dbReference>
<dbReference type="InterPro" id="IPR027304">
    <property type="entry name" value="Trigger_fact/SurA_dom_sf"/>
</dbReference>
<dbReference type="NCBIfam" id="TIGR00115">
    <property type="entry name" value="tig"/>
    <property type="match status" value="1"/>
</dbReference>
<dbReference type="PANTHER" id="PTHR30560">
    <property type="entry name" value="TRIGGER FACTOR CHAPERONE AND PEPTIDYL-PROLYL CIS/TRANS ISOMERASE"/>
    <property type="match status" value="1"/>
</dbReference>
<dbReference type="PANTHER" id="PTHR30560:SF3">
    <property type="entry name" value="TRIGGER FACTOR-LIKE PROTEIN TIG, CHLOROPLASTIC"/>
    <property type="match status" value="1"/>
</dbReference>
<dbReference type="Pfam" id="PF00254">
    <property type="entry name" value="FKBP_C"/>
    <property type="match status" value="1"/>
</dbReference>
<dbReference type="Pfam" id="PF05698">
    <property type="entry name" value="Trigger_C"/>
    <property type="match status" value="1"/>
</dbReference>
<dbReference type="Pfam" id="PF05697">
    <property type="entry name" value="Trigger_N"/>
    <property type="match status" value="1"/>
</dbReference>
<dbReference type="PIRSF" id="PIRSF003095">
    <property type="entry name" value="Trigger_factor"/>
    <property type="match status" value="1"/>
</dbReference>
<dbReference type="SUPFAM" id="SSF54534">
    <property type="entry name" value="FKBP-like"/>
    <property type="match status" value="1"/>
</dbReference>
<dbReference type="SUPFAM" id="SSF109998">
    <property type="entry name" value="Triger factor/SurA peptide-binding domain-like"/>
    <property type="match status" value="1"/>
</dbReference>
<dbReference type="SUPFAM" id="SSF102735">
    <property type="entry name" value="Trigger factor ribosome-binding domain"/>
    <property type="match status" value="1"/>
</dbReference>
<dbReference type="PROSITE" id="PS50059">
    <property type="entry name" value="FKBP_PPIASE"/>
    <property type="match status" value="1"/>
</dbReference>
<name>TIG_BACC1</name>
<proteinExistence type="inferred from homology"/>